<accession>Q09MJ3</accession>
<proteinExistence type="inferred from homology"/>
<protein>
    <recommendedName>
        <fullName evidence="1">ATP synthase subunit alpha, chloroplastic</fullName>
        <ecNumber evidence="1">7.1.2.2</ecNumber>
    </recommendedName>
    <alternativeName>
        <fullName evidence="1">ATP synthase F1 sector subunit alpha</fullName>
    </alternativeName>
    <alternativeName>
        <fullName evidence="1">F-ATPase subunit alpha</fullName>
    </alternativeName>
</protein>
<keyword id="KW-0066">ATP synthesis</keyword>
<keyword id="KW-0067">ATP-binding</keyword>
<keyword id="KW-0139">CF(1)</keyword>
<keyword id="KW-0150">Chloroplast</keyword>
<keyword id="KW-0375">Hydrogen ion transport</keyword>
<keyword id="KW-0406">Ion transport</keyword>
<keyword id="KW-0472">Membrane</keyword>
<keyword id="KW-0547">Nucleotide-binding</keyword>
<keyword id="KW-0934">Plastid</keyword>
<keyword id="KW-0793">Thylakoid</keyword>
<keyword id="KW-1278">Translocase</keyword>
<keyword id="KW-0813">Transport</keyword>
<dbReference type="EC" id="7.1.2.2" evidence="1"/>
<dbReference type="EMBL" id="DQ864733">
    <property type="protein sequence ID" value="ABI49005.1"/>
    <property type="molecule type" value="Genomic_DNA"/>
</dbReference>
<dbReference type="RefSeq" id="YP_740460.1">
    <property type="nucleotide sequence ID" value="NC_008334.1"/>
</dbReference>
<dbReference type="SMR" id="Q09MJ3"/>
<dbReference type="GeneID" id="4271228"/>
<dbReference type="KEGG" id="cit:4271228"/>
<dbReference type="OrthoDB" id="843516at71240"/>
<dbReference type="GO" id="GO:0009535">
    <property type="term" value="C:chloroplast thylakoid membrane"/>
    <property type="evidence" value="ECO:0007669"/>
    <property type="project" value="UniProtKB-SubCell"/>
</dbReference>
<dbReference type="GO" id="GO:0045259">
    <property type="term" value="C:proton-transporting ATP synthase complex"/>
    <property type="evidence" value="ECO:0007669"/>
    <property type="project" value="UniProtKB-KW"/>
</dbReference>
<dbReference type="GO" id="GO:0005524">
    <property type="term" value="F:ATP binding"/>
    <property type="evidence" value="ECO:0007669"/>
    <property type="project" value="UniProtKB-UniRule"/>
</dbReference>
<dbReference type="GO" id="GO:0046933">
    <property type="term" value="F:proton-transporting ATP synthase activity, rotational mechanism"/>
    <property type="evidence" value="ECO:0007669"/>
    <property type="project" value="UniProtKB-UniRule"/>
</dbReference>
<dbReference type="CDD" id="cd18113">
    <property type="entry name" value="ATP-synt_F1_alpha_C"/>
    <property type="match status" value="1"/>
</dbReference>
<dbReference type="CDD" id="cd18116">
    <property type="entry name" value="ATP-synt_F1_alpha_N"/>
    <property type="match status" value="1"/>
</dbReference>
<dbReference type="CDD" id="cd01132">
    <property type="entry name" value="F1-ATPase_alpha_CD"/>
    <property type="match status" value="1"/>
</dbReference>
<dbReference type="FunFam" id="1.20.150.20:FF:000001">
    <property type="entry name" value="ATP synthase subunit alpha"/>
    <property type="match status" value="1"/>
</dbReference>
<dbReference type="FunFam" id="2.40.30.20:FF:000001">
    <property type="entry name" value="ATP synthase subunit alpha"/>
    <property type="match status" value="1"/>
</dbReference>
<dbReference type="FunFam" id="3.40.50.300:FF:000002">
    <property type="entry name" value="ATP synthase subunit alpha"/>
    <property type="match status" value="1"/>
</dbReference>
<dbReference type="Gene3D" id="2.40.30.20">
    <property type="match status" value="1"/>
</dbReference>
<dbReference type="Gene3D" id="1.20.150.20">
    <property type="entry name" value="ATP synthase alpha/beta chain, C-terminal domain"/>
    <property type="match status" value="1"/>
</dbReference>
<dbReference type="Gene3D" id="3.40.50.300">
    <property type="entry name" value="P-loop containing nucleotide triphosphate hydrolases"/>
    <property type="match status" value="1"/>
</dbReference>
<dbReference type="HAMAP" id="MF_01346">
    <property type="entry name" value="ATP_synth_alpha_bact"/>
    <property type="match status" value="1"/>
</dbReference>
<dbReference type="InterPro" id="IPR023366">
    <property type="entry name" value="ATP_synth_asu-like_sf"/>
</dbReference>
<dbReference type="InterPro" id="IPR000793">
    <property type="entry name" value="ATP_synth_asu_C"/>
</dbReference>
<dbReference type="InterPro" id="IPR038376">
    <property type="entry name" value="ATP_synth_asu_C_sf"/>
</dbReference>
<dbReference type="InterPro" id="IPR033732">
    <property type="entry name" value="ATP_synth_F1_a_nt-bd_dom"/>
</dbReference>
<dbReference type="InterPro" id="IPR005294">
    <property type="entry name" value="ATP_synth_F1_asu"/>
</dbReference>
<dbReference type="InterPro" id="IPR020003">
    <property type="entry name" value="ATPase_a/bsu_AS"/>
</dbReference>
<dbReference type="InterPro" id="IPR004100">
    <property type="entry name" value="ATPase_F1/V1/A1_a/bsu_N"/>
</dbReference>
<dbReference type="InterPro" id="IPR036121">
    <property type="entry name" value="ATPase_F1/V1/A1_a/bsu_N_sf"/>
</dbReference>
<dbReference type="InterPro" id="IPR000194">
    <property type="entry name" value="ATPase_F1/V1/A1_a/bsu_nucl-bd"/>
</dbReference>
<dbReference type="InterPro" id="IPR027417">
    <property type="entry name" value="P-loop_NTPase"/>
</dbReference>
<dbReference type="NCBIfam" id="TIGR00962">
    <property type="entry name" value="atpA"/>
    <property type="match status" value="1"/>
</dbReference>
<dbReference type="NCBIfam" id="NF009884">
    <property type="entry name" value="PRK13343.1"/>
    <property type="match status" value="1"/>
</dbReference>
<dbReference type="PANTHER" id="PTHR48082">
    <property type="entry name" value="ATP SYNTHASE SUBUNIT ALPHA, MITOCHONDRIAL"/>
    <property type="match status" value="1"/>
</dbReference>
<dbReference type="PANTHER" id="PTHR48082:SF2">
    <property type="entry name" value="ATP SYNTHASE SUBUNIT ALPHA, MITOCHONDRIAL"/>
    <property type="match status" value="1"/>
</dbReference>
<dbReference type="Pfam" id="PF00006">
    <property type="entry name" value="ATP-synt_ab"/>
    <property type="match status" value="1"/>
</dbReference>
<dbReference type="Pfam" id="PF00306">
    <property type="entry name" value="ATP-synt_ab_C"/>
    <property type="match status" value="1"/>
</dbReference>
<dbReference type="Pfam" id="PF02874">
    <property type="entry name" value="ATP-synt_ab_N"/>
    <property type="match status" value="1"/>
</dbReference>
<dbReference type="PIRSF" id="PIRSF039088">
    <property type="entry name" value="F_ATPase_subunit_alpha"/>
    <property type="match status" value="1"/>
</dbReference>
<dbReference type="SUPFAM" id="SSF47917">
    <property type="entry name" value="C-terminal domain of alpha and beta subunits of F1 ATP synthase"/>
    <property type="match status" value="1"/>
</dbReference>
<dbReference type="SUPFAM" id="SSF50615">
    <property type="entry name" value="N-terminal domain of alpha and beta subunits of F1 ATP synthase"/>
    <property type="match status" value="1"/>
</dbReference>
<dbReference type="SUPFAM" id="SSF52540">
    <property type="entry name" value="P-loop containing nucleoside triphosphate hydrolases"/>
    <property type="match status" value="1"/>
</dbReference>
<dbReference type="PROSITE" id="PS00152">
    <property type="entry name" value="ATPASE_ALPHA_BETA"/>
    <property type="match status" value="1"/>
</dbReference>
<reference key="1">
    <citation type="journal article" date="2006" name="BMC Plant Biol.">
        <title>The complete chloroplast genome sequence of Citrus sinensis (L.) Osbeck var 'Ridge Pineapple': organization and phylogenetic relationships to other angiosperms.</title>
        <authorList>
            <person name="Bausher M.G."/>
            <person name="Singh N.D."/>
            <person name="Lee S.-B."/>
            <person name="Jansen R.K."/>
            <person name="Daniell H."/>
        </authorList>
    </citation>
    <scope>NUCLEOTIDE SEQUENCE [LARGE SCALE GENOMIC DNA]</scope>
    <source>
        <strain>cv. Osbeck var. Ridge Pineapple</strain>
    </source>
</reference>
<organism>
    <name type="scientific">Citrus sinensis</name>
    <name type="common">Sweet orange</name>
    <name type="synonym">Citrus aurantium var. sinensis</name>
    <dbReference type="NCBI Taxonomy" id="2711"/>
    <lineage>
        <taxon>Eukaryota</taxon>
        <taxon>Viridiplantae</taxon>
        <taxon>Streptophyta</taxon>
        <taxon>Embryophyta</taxon>
        <taxon>Tracheophyta</taxon>
        <taxon>Spermatophyta</taxon>
        <taxon>Magnoliopsida</taxon>
        <taxon>eudicotyledons</taxon>
        <taxon>Gunneridae</taxon>
        <taxon>Pentapetalae</taxon>
        <taxon>rosids</taxon>
        <taxon>malvids</taxon>
        <taxon>Sapindales</taxon>
        <taxon>Rutaceae</taxon>
        <taxon>Aurantioideae</taxon>
        <taxon>Citrus</taxon>
    </lineage>
</organism>
<name>ATPA_CITSI</name>
<comment type="function">
    <text evidence="1">Produces ATP from ADP in the presence of a proton gradient across the membrane. The alpha chain is a regulatory subunit.</text>
</comment>
<comment type="catalytic activity">
    <reaction evidence="1">
        <text>ATP + H2O + 4 H(+)(in) = ADP + phosphate + 5 H(+)(out)</text>
        <dbReference type="Rhea" id="RHEA:57720"/>
        <dbReference type="ChEBI" id="CHEBI:15377"/>
        <dbReference type="ChEBI" id="CHEBI:15378"/>
        <dbReference type="ChEBI" id="CHEBI:30616"/>
        <dbReference type="ChEBI" id="CHEBI:43474"/>
        <dbReference type="ChEBI" id="CHEBI:456216"/>
        <dbReference type="EC" id="7.1.2.2"/>
    </reaction>
</comment>
<comment type="subunit">
    <text evidence="1">F-type ATPases have 2 components, CF(1) - the catalytic core - and CF(0) - the membrane proton channel. CF(1) has five subunits: alpha(3), beta(3), gamma(1), delta(1), epsilon(1). CF(0) has four main subunits: a, b, b' and c.</text>
</comment>
<comment type="subcellular location">
    <subcellularLocation>
        <location evidence="1">Plastid</location>
        <location evidence="1">Chloroplast thylakoid membrane</location>
        <topology evidence="1">Peripheral membrane protein</topology>
    </subcellularLocation>
</comment>
<comment type="similarity">
    <text evidence="1">Belongs to the ATPase alpha/beta chains family.</text>
</comment>
<feature type="chain" id="PRO_0000275163" description="ATP synthase subunit alpha, chloroplastic">
    <location>
        <begin position="1"/>
        <end position="507"/>
    </location>
</feature>
<feature type="binding site" evidence="1">
    <location>
        <begin position="170"/>
        <end position="177"/>
    </location>
    <ligand>
        <name>ATP</name>
        <dbReference type="ChEBI" id="CHEBI:30616"/>
    </ligand>
</feature>
<feature type="site" description="Required for activity" evidence="1">
    <location>
        <position position="363"/>
    </location>
</feature>
<evidence type="ECO:0000255" key="1">
    <source>
        <dbReference type="HAMAP-Rule" id="MF_01346"/>
    </source>
</evidence>
<sequence length="507" mass="55486">MTTIKADEISNIIRERIEQYNREVKIVNIGTVLQVGDGIARIYGLDEVMAGELVEFEEGTIGIALNLESTNVGVVLMGDGLMIQEGSSVKATGKIAQIPVSEAYLGRVINALAKPIDGRGEISASESRLIESPAPGIISRRSVYEPLQTGLIAIDSMIPIGRGQRELIIGDRQTGKTAVATDTILNQQGQNVICVYVAIGQKASSVAQVVNTFQERGAMDYTIVVAETADSPATLQYLAPYTGAALAEYFMYRERHTLIIYDDPSKQAQAYRQMSLLLRRPPGREAYPGDVFYLHSRLLERAAKLGSQLGEGSMTALPIVETQSGDVSAYIPTNVISITDGQIFLSADLFNAGIRPAINVGISVSRVGSAAQIKAMKQVAGKLKLELAQFAELEAFAQFASDLDKATQNQLARGQRLRELLKQAQAAPLTVEEQIMTIYTGTNGYLDSLEIGQVRKFLVELRTYLKTNKPQFQEIISSTKIFTEEAEALLQEAIQEQKERFLLQEQF</sequence>
<geneLocation type="chloroplast"/>
<gene>
    <name evidence="1" type="primary">atpA</name>
</gene>